<accession>P0CAS6</accession>
<comment type="function">
    <text evidence="5">Snake venom phospholipase A2 (PLA2) that produces neuromuscular blockade in chick biventer cervicis preparations in the absence and presence of crotapotin. In contrast, in mouse phrenic nerve-diaphragm preparations, the neuromuscular blockade is dependent on crotapotin. PLA2 catalyzes the calcium-dependent hydrolysis of the 2-acyl groups in 3-sn-phosphoglycerides.</text>
</comment>
<comment type="catalytic activity">
    <reaction evidence="3 4">
        <text>a 1,2-diacyl-sn-glycero-3-phosphocholine + H2O = a 1-acyl-sn-glycero-3-phosphocholine + a fatty acid + H(+)</text>
        <dbReference type="Rhea" id="RHEA:15801"/>
        <dbReference type="ChEBI" id="CHEBI:15377"/>
        <dbReference type="ChEBI" id="CHEBI:15378"/>
        <dbReference type="ChEBI" id="CHEBI:28868"/>
        <dbReference type="ChEBI" id="CHEBI:57643"/>
        <dbReference type="ChEBI" id="CHEBI:58168"/>
        <dbReference type="EC" id="3.1.1.4"/>
    </reaction>
</comment>
<comment type="cofactor">
    <cofactor evidence="1">
        <name>Ca(2+)</name>
        <dbReference type="ChEBI" id="CHEBI:29108"/>
    </cofactor>
    <text evidence="1">Binds 1 Ca(2+) ion.</text>
</comment>
<comment type="activity regulation">
    <text evidence="5">Pre-incubation with heparin markedly reduces the neurotoxicity of this toxin.</text>
</comment>
<comment type="biophysicochemical properties">
    <phDependence>
        <text evidence="5">Optimum pH is 7.9.</text>
    </phDependence>
    <temperatureDependence>
        <text evidence="5">Optimum temperature is 25 degrees Celsius.</text>
    </temperatureDependence>
</comment>
<comment type="subcellular location">
    <subcellularLocation>
        <location>Secreted</location>
    </subcellularLocation>
</comment>
<comment type="tissue specificity">
    <text>Expressed by the venom gland.</text>
</comment>
<comment type="similarity">
    <text evidence="6">Belongs to the phospholipase A2 family. Group II subfamily. D49 sub-subfamily.</text>
</comment>
<sequence>SLLQFNKMIKFETRKNAVPFYAFYGCYCGWGGRRRPKDATDRCCFVHDCCYEKVTKCNTKWDIYRYSLKSGYITCGKGTWCKEQICECDRVAAECLRRSLSTYKNGYMFYPDSRCRGPSETC</sequence>
<evidence type="ECO:0000250" key="1"/>
<evidence type="ECO:0000250" key="2">
    <source>
        <dbReference type="UniProtKB" id="P62022"/>
    </source>
</evidence>
<evidence type="ECO:0000255" key="3">
    <source>
        <dbReference type="PROSITE-ProRule" id="PRU10035"/>
    </source>
</evidence>
<evidence type="ECO:0000255" key="4">
    <source>
        <dbReference type="PROSITE-ProRule" id="PRU10036"/>
    </source>
</evidence>
<evidence type="ECO:0000269" key="5">
    <source>
    </source>
</evidence>
<evidence type="ECO:0000305" key="6"/>
<protein>
    <recommendedName>
        <fullName>Basic phospholipase A2 F16</fullName>
        <shortName>svPLA2</shortName>
        <ecNumber>3.1.1.4</ecNumber>
    </recommendedName>
    <alternativeName>
        <fullName>CdtF16</fullName>
    </alternativeName>
    <alternativeName>
        <fullName>Phosphatidylcholine 2-acylhydrolase</fullName>
    </alternativeName>
</protein>
<dbReference type="EC" id="3.1.1.4"/>
<dbReference type="SMR" id="P0CAS6"/>
<dbReference type="GO" id="GO:0005576">
    <property type="term" value="C:extracellular region"/>
    <property type="evidence" value="ECO:0007669"/>
    <property type="project" value="UniProtKB-SubCell"/>
</dbReference>
<dbReference type="GO" id="GO:0005509">
    <property type="term" value="F:calcium ion binding"/>
    <property type="evidence" value="ECO:0007669"/>
    <property type="project" value="InterPro"/>
</dbReference>
<dbReference type="GO" id="GO:0047498">
    <property type="term" value="F:calcium-dependent phospholipase A2 activity"/>
    <property type="evidence" value="ECO:0007669"/>
    <property type="project" value="TreeGrafter"/>
</dbReference>
<dbReference type="GO" id="GO:0005543">
    <property type="term" value="F:phospholipid binding"/>
    <property type="evidence" value="ECO:0007669"/>
    <property type="project" value="TreeGrafter"/>
</dbReference>
<dbReference type="GO" id="GO:0090729">
    <property type="term" value="F:toxin activity"/>
    <property type="evidence" value="ECO:0007669"/>
    <property type="project" value="UniProtKB-KW"/>
</dbReference>
<dbReference type="GO" id="GO:0050482">
    <property type="term" value="P:arachidonate secretion"/>
    <property type="evidence" value="ECO:0007669"/>
    <property type="project" value="InterPro"/>
</dbReference>
<dbReference type="GO" id="GO:0016042">
    <property type="term" value="P:lipid catabolic process"/>
    <property type="evidence" value="ECO:0007669"/>
    <property type="project" value="UniProtKB-KW"/>
</dbReference>
<dbReference type="GO" id="GO:0042130">
    <property type="term" value="P:negative regulation of T cell proliferation"/>
    <property type="evidence" value="ECO:0007669"/>
    <property type="project" value="TreeGrafter"/>
</dbReference>
<dbReference type="GO" id="GO:0006644">
    <property type="term" value="P:phospholipid metabolic process"/>
    <property type="evidence" value="ECO:0007669"/>
    <property type="project" value="InterPro"/>
</dbReference>
<dbReference type="CDD" id="cd00125">
    <property type="entry name" value="PLA2c"/>
    <property type="match status" value="1"/>
</dbReference>
<dbReference type="FunFam" id="1.20.90.10:FF:000001">
    <property type="entry name" value="Basic phospholipase A2 homolog"/>
    <property type="match status" value="1"/>
</dbReference>
<dbReference type="Gene3D" id="1.20.90.10">
    <property type="entry name" value="Phospholipase A2 domain"/>
    <property type="match status" value="1"/>
</dbReference>
<dbReference type="InterPro" id="IPR001211">
    <property type="entry name" value="PLipase_A2"/>
</dbReference>
<dbReference type="InterPro" id="IPR033112">
    <property type="entry name" value="PLipase_A2_Asp_AS"/>
</dbReference>
<dbReference type="InterPro" id="IPR016090">
    <property type="entry name" value="PLipase_A2_dom"/>
</dbReference>
<dbReference type="InterPro" id="IPR036444">
    <property type="entry name" value="PLipase_A2_dom_sf"/>
</dbReference>
<dbReference type="InterPro" id="IPR033113">
    <property type="entry name" value="PLipase_A2_His_AS"/>
</dbReference>
<dbReference type="PANTHER" id="PTHR11716">
    <property type="entry name" value="PHOSPHOLIPASE A2 FAMILY MEMBER"/>
    <property type="match status" value="1"/>
</dbReference>
<dbReference type="PANTHER" id="PTHR11716:SF9">
    <property type="entry name" value="PHOSPHOLIPASE A2, MEMBRANE ASSOCIATED"/>
    <property type="match status" value="1"/>
</dbReference>
<dbReference type="Pfam" id="PF00068">
    <property type="entry name" value="Phospholip_A2_1"/>
    <property type="match status" value="1"/>
</dbReference>
<dbReference type="PRINTS" id="PR00389">
    <property type="entry name" value="PHPHLIPASEA2"/>
</dbReference>
<dbReference type="SMART" id="SM00085">
    <property type="entry name" value="PA2c"/>
    <property type="match status" value="1"/>
</dbReference>
<dbReference type="SUPFAM" id="SSF48619">
    <property type="entry name" value="Phospholipase A2, PLA2"/>
    <property type="match status" value="1"/>
</dbReference>
<dbReference type="PROSITE" id="PS00119">
    <property type="entry name" value="PA2_ASP"/>
    <property type="match status" value="1"/>
</dbReference>
<dbReference type="PROSITE" id="PS00118">
    <property type="entry name" value="PA2_HIS"/>
    <property type="match status" value="1"/>
</dbReference>
<organism>
    <name type="scientific">Crotalus durissus terrificus</name>
    <name type="common">South American rattlesnake</name>
    <dbReference type="NCBI Taxonomy" id="8732"/>
    <lineage>
        <taxon>Eukaryota</taxon>
        <taxon>Metazoa</taxon>
        <taxon>Chordata</taxon>
        <taxon>Craniata</taxon>
        <taxon>Vertebrata</taxon>
        <taxon>Euteleostomi</taxon>
        <taxon>Lepidosauria</taxon>
        <taxon>Squamata</taxon>
        <taxon>Bifurcata</taxon>
        <taxon>Unidentata</taxon>
        <taxon>Episquamata</taxon>
        <taxon>Toxicofera</taxon>
        <taxon>Serpentes</taxon>
        <taxon>Colubroidea</taxon>
        <taxon>Viperidae</taxon>
        <taxon>Crotalinae</taxon>
        <taxon>Crotalus</taxon>
    </lineage>
</organism>
<keyword id="KW-0106">Calcium</keyword>
<keyword id="KW-0903">Direct protein sequencing</keyword>
<keyword id="KW-1015">Disulfide bond</keyword>
<keyword id="KW-0378">Hydrolase</keyword>
<keyword id="KW-0442">Lipid degradation</keyword>
<keyword id="KW-0443">Lipid metabolism</keyword>
<keyword id="KW-0479">Metal-binding</keyword>
<keyword id="KW-0528">Neurotoxin</keyword>
<keyword id="KW-0964">Secreted</keyword>
<keyword id="KW-0800">Toxin</keyword>
<feature type="chain" id="PRO_0000376923" description="Basic phospholipase A2 F16">
    <location>
        <begin position="1"/>
        <end position="122"/>
    </location>
</feature>
<feature type="active site" evidence="2">
    <location>
        <position position="47"/>
    </location>
</feature>
<feature type="active site" evidence="2">
    <location>
        <position position="89"/>
    </location>
</feature>
<feature type="binding site" evidence="2">
    <location>
        <position position="27"/>
    </location>
    <ligand>
        <name>Ca(2+)</name>
        <dbReference type="ChEBI" id="CHEBI:29108"/>
    </ligand>
</feature>
<feature type="binding site" evidence="2">
    <location>
        <position position="29"/>
    </location>
    <ligand>
        <name>Ca(2+)</name>
        <dbReference type="ChEBI" id="CHEBI:29108"/>
    </ligand>
</feature>
<feature type="binding site" evidence="2">
    <location>
        <position position="31"/>
    </location>
    <ligand>
        <name>Ca(2+)</name>
        <dbReference type="ChEBI" id="CHEBI:29108"/>
    </ligand>
</feature>
<feature type="binding site" evidence="2">
    <location>
        <position position="48"/>
    </location>
    <ligand>
        <name>Ca(2+)</name>
        <dbReference type="ChEBI" id="CHEBI:29108"/>
    </ligand>
</feature>
<feature type="disulfide bond" evidence="2">
    <location>
        <begin position="26"/>
        <end position="115"/>
    </location>
</feature>
<feature type="disulfide bond" evidence="2">
    <location>
        <begin position="28"/>
        <end position="44"/>
    </location>
</feature>
<feature type="disulfide bond" evidence="2">
    <location>
        <begin position="43"/>
        <end position="95"/>
    </location>
</feature>
<feature type="disulfide bond" evidence="2">
    <location>
        <begin position="49"/>
        <end position="122"/>
    </location>
</feature>
<feature type="disulfide bond" evidence="2">
    <location>
        <begin position="50"/>
        <end position="88"/>
    </location>
</feature>
<feature type="disulfide bond" evidence="2">
    <location>
        <begin position="57"/>
        <end position="81"/>
    </location>
</feature>
<feature type="disulfide bond" evidence="2">
    <location>
        <begin position="75"/>
        <end position="86"/>
    </location>
</feature>
<name>PA2BF_CRODU</name>
<reference key="1">
    <citation type="journal article" date="2005" name="Protein J.">
        <title>Biochemical, pharmacological and structural characterization of a new PLA2 from Crotalus durissus terrificus (South American rattlesnake) venom.</title>
        <authorList>
            <person name="Hernandez-Oliveira S."/>
            <person name="Toyama M.H."/>
            <person name="Toyama D.O."/>
            <person name="Marangoni S."/>
            <person name="Hyslop S."/>
            <person name="Rodrigues-Simioni L."/>
        </authorList>
    </citation>
    <scope>PROTEIN SEQUENCE</scope>
    <scope>FUNCTION</scope>
    <scope>ACTIVITY REGULATION</scope>
    <scope>BIOPHYSICOCHEMICAL PROPERTIES</scope>
    <source>
        <tissue>Venom</tissue>
    </source>
</reference>
<proteinExistence type="evidence at protein level"/>